<accession>A3NDK8</accession>
<reference key="1">
    <citation type="journal article" date="2010" name="Genome Biol. Evol.">
        <title>Continuing evolution of Burkholderia mallei through genome reduction and large-scale rearrangements.</title>
        <authorList>
            <person name="Losada L."/>
            <person name="Ronning C.M."/>
            <person name="DeShazer D."/>
            <person name="Woods D."/>
            <person name="Fedorova N."/>
            <person name="Kim H.S."/>
            <person name="Shabalina S.A."/>
            <person name="Pearson T.R."/>
            <person name="Brinkac L."/>
            <person name="Tan P."/>
            <person name="Nandi T."/>
            <person name="Crabtree J."/>
            <person name="Badger J."/>
            <person name="Beckstrom-Sternberg S."/>
            <person name="Saqib M."/>
            <person name="Schutzer S.E."/>
            <person name="Keim P."/>
            <person name="Nierman W.C."/>
        </authorList>
    </citation>
    <scope>NUCLEOTIDE SEQUENCE [LARGE SCALE GENOMIC DNA]</scope>
    <source>
        <strain>668</strain>
    </source>
</reference>
<feature type="chain" id="PRO_1000008546" description="4-hydroxy-tetrahydrodipicolinate reductase">
    <location>
        <begin position="1"/>
        <end position="265"/>
    </location>
</feature>
<feature type="active site" description="Proton donor/acceptor" evidence="1">
    <location>
        <position position="153"/>
    </location>
</feature>
<feature type="active site" description="Proton donor" evidence="1">
    <location>
        <position position="157"/>
    </location>
</feature>
<feature type="binding site" evidence="1">
    <location>
        <begin position="7"/>
        <end position="12"/>
    </location>
    <ligand>
        <name>NAD(+)</name>
        <dbReference type="ChEBI" id="CHEBI:57540"/>
    </ligand>
</feature>
<feature type="binding site" evidence="1">
    <location>
        <position position="33"/>
    </location>
    <ligand>
        <name>NAD(+)</name>
        <dbReference type="ChEBI" id="CHEBI:57540"/>
    </ligand>
</feature>
<feature type="binding site" evidence="1">
    <location>
        <position position="34"/>
    </location>
    <ligand>
        <name>NADP(+)</name>
        <dbReference type="ChEBI" id="CHEBI:58349"/>
    </ligand>
</feature>
<feature type="binding site" evidence="1">
    <location>
        <begin position="96"/>
        <end position="98"/>
    </location>
    <ligand>
        <name>NAD(+)</name>
        <dbReference type="ChEBI" id="CHEBI:57540"/>
    </ligand>
</feature>
<feature type="binding site" evidence="1">
    <location>
        <begin position="120"/>
        <end position="123"/>
    </location>
    <ligand>
        <name>NAD(+)</name>
        <dbReference type="ChEBI" id="CHEBI:57540"/>
    </ligand>
</feature>
<feature type="binding site" evidence="1">
    <location>
        <position position="154"/>
    </location>
    <ligand>
        <name>(S)-2,3,4,5-tetrahydrodipicolinate</name>
        <dbReference type="ChEBI" id="CHEBI:16845"/>
    </ligand>
</feature>
<feature type="binding site" evidence="1">
    <location>
        <begin position="163"/>
        <end position="164"/>
    </location>
    <ligand>
        <name>(S)-2,3,4,5-tetrahydrodipicolinate</name>
        <dbReference type="ChEBI" id="CHEBI:16845"/>
    </ligand>
</feature>
<name>DAPB_BURP6</name>
<organism>
    <name type="scientific">Burkholderia pseudomallei (strain 668)</name>
    <dbReference type="NCBI Taxonomy" id="320373"/>
    <lineage>
        <taxon>Bacteria</taxon>
        <taxon>Pseudomonadati</taxon>
        <taxon>Pseudomonadota</taxon>
        <taxon>Betaproteobacteria</taxon>
        <taxon>Burkholderiales</taxon>
        <taxon>Burkholderiaceae</taxon>
        <taxon>Burkholderia</taxon>
        <taxon>pseudomallei group</taxon>
    </lineage>
</organism>
<keyword id="KW-0028">Amino-acid biosynthesis</keyword>
<keyword id="KW-0963">Cytoplasm</keyword>
<keyword id="KW-0220">Diaminopimelate biosynthesis</keyword>
<keyword id="KW-0457">Lysine biosynthesis</keyword>
<keyword id="KW-0520">NAD</keyword>
<keyword id="KW-0521">NADP</keyword>
<keyword id="KW-0560">Oxidoreductase</keyword>
<protein>
    <recommendedName>
        <fullName evidence="1">4-hydroxy-tetrahydrodipicolinate reductase</fullName>
        <shortName evidence="1">HTPA reductase</shortName>
        <ecNumber evidence="1">1.17.1.8</ecNumber>
    </recommendedName>
</protein>
<comment type="function">
    <text evidence="1">Catalyzes the conversion of 4-hydroxy-tetrahydrodipicolinate (HTPA) to tetrahydrodipicolinate.</text>
</comment>
<comment type="catalytic activity">
    <reaction evidence="1">
        <text>(S)-2,3,4,5-tetrahydrodipicolinate + NAD(+) + H2O = (2S,4S)-4-hydroxy-2,3,4,5-tetrahydrodipicolinate + NADH + H(+)</text>
        <dbReference type="Rhea" id="RHEA:35323"/>
        <dbReference type="ChEBI" id="CHEBI:15377"/>
        <dbReference type="ChEBI" id="CHEBI:15378"/>
        <dbReference type="ChEBI" id="CHEBI:16845"/>
        <dbReference type="ChEBI" id="CHEBI:57540"/>
        <dbReference type="ChEBI" id="CHEBI:57945"/>
        <dbReference type="ChEBI" id="CHEBI:67139"/>
        <dbReference type="EC" id="1.17.1.8"/>
    </reaction>
</comment>
<comment type="catalytic activity">
    <reaction evidence="1">
        <text>(S)-2,3,4,5-tetrahydrodipicolinate + NADP(+) + H2O = (2S,4S)-4-hydroxy-2,3,4,5-tetrahydrodipicolinate + NADPH + H(+)</text>
        <dbReference type="Rhea" id="RHEA:35331"/>
        <dbReference type="ChEBI" id="CHEBI:15377"/>
        <dbReference type="ChEBI" id="CHEBI:15378"/>
        <dbReference type="ChEBI" id="CHEBI:16845"/>
        <dbReference type="ChEBI" id="CHEBI:57783"/>
        <dbReference type="ChEBI" id="CHEBI:58349"/>
        <dbReference type="ChEBI" id="CHEBI:67139"/>
        <dbReference type="EC" id="1.17.1.8"/>
    </reaction>
</comment>
<comment type="pathway">
    <text evidence="1">Amino-acid biosynthesis; L-lysine biosynthesis via DAP pathway; (S)-tetrahydrodipicolinate from L-aspartate: step 4/4.</text>
</comment>
<comment type="subcellular location">
    <subcellularLocation>
        <location evidence="1">Cytoplasm</location>
    </subcellularLocation>
</comment>
<comment type="similarity">
    <text evidence="1">Belongs to the DapB family.</text>
</comment>
<comment type="caution">
    <text evidence="2">Was originally thought to be a dihydrodipicolinate reductase (DHDPR), catalyzing the conversion of dihydrodipicolinate to tetrahydrodipicolinate. However, it was shown in E.coli that the substrate of the enzymatic reaction is not dihydrodipicolinate (DHDP) but in fact (2S,4S)-4-hydroxy-2,3,4,5-tetrahydrodipicolinic acid (HTPA), the product released by the DapA-catalyzed reaction.</text>
</comment>
<comment type="sequence caution" evidence="2">
    <conflict type="erroneous initiation">
        <sequence resource="EMBL-CDS" id="ABN84203"/>
    </conflict>
    <text>Extended N-terminus.</text>
</comment>
<evidence type="ECO:0000255" key="1">
    <source>
        <dbReference type="HAMAP-Rule" id="MF_00102"/>
    </source>
</evidence>
<evidence type="ECO:0000305" key="2"/>
<sequence length="265" mass="27831">MKIAIAGASGRMGRMLIEAVLAAPDATLAGALDRTGSPQLGQDAGAFLGKQTGVALTDDIERVCAEADYLIDFTRPEGTLAHLDAALRHDVKLVIGTTGFSEPQKAQLRAAGGKIALVFSANMSVGVNVTMKLLEFAAKQFAQGYDIEIIEAHHRHKVDAPSGTALMMGETIAAATGRTLDDCAVYGRHGVTGERDPSTIGFSAIRGGDIVGDHTVLFAGIGERIEITHKSASRVSYAQGALRAARFLAGHQAGFFDMQDVLGLR</sequence>
<gene>
    <name evidence="1" type="primary">dapB</name>
    <name type="ordered locus">BURPS668_3418</name>
</gene>
<proteinExistence type="inferred from homology"/>
<dbReference type="EC" id="1.17.1.8" evidence="1"/>
<dbReference type="EMBL" id="CP000570">
    <property type="protein sequence ID" value="ABN84203.2"/>
    <property type="status" value="ALT_INIT"/>
    <property type="molecule type" value="Genomic_DNA"/>
</dbReference>
<dbReference type="RefSeq" id="WP_004557251.1">
    <property type="nucleotide sequence ID" value="NC_009074.1"/>
</dbReference>
<dbReference type="SMR" id="A3NDK8"/>
<dbReference type="GeneID" id="93061539"/>
<dbReference type="KEGG" id="bpd:BURPS668_3418"/>
<dbReference type="HOGENOM" id="CLU_047479_2_1_4"/>
<dbReference type="UniPathway" id="UPA00034">
    <property type="reaction ID" value="UER00018"/>
</dbReference>
<dbReference type="GO" id="GO:0005829">
    <property type="term" value="C:cytosol"/>
    <property type="evidence" value="ECO:0007669"/>
    <property type="project" value="TreeGrafter"/>
</dbReference>
<dbReference type="GO" id="GO:0008839">
    <property type="term" value="F:4-hydroxy-tetrahydrodipicolinate reductase"/>
    <property type="evidence" value="ECO:0007669"/>
    <property type="project" value="UniProtKB-EC"/>
</dbReference>
<dbReference type="GO" id="GO:0051287">
    <property type="term" value="F:NAD binding"/>
    <property type="evidence" value="ECO:0007669"/>
    <property type="project" value="UniProtKB-UniRule"/>
</dbReference>
<dbReference type="GO" id="GO:0050661">
    <property type="term" value="F:NADP binding"/>
    <property type="evidence" value="ECO:0007669"/>
    <property type="project" value="UniProtKB-UniRule"/>
</dbReference>
<dbReference type="GO" id="GO:0016726">
    <property type="term" value="F:oxidoreductase activity, acting on CH or CH2 groups, NAD or NADP as acceptor"/>
    <property type="evidence" value="ECO:0007669"/>
    <property type="project" value="UniProtKB-UniRule"/>
</dbReference>
<dbReference type="GO" id="GO:0019877">
    <property type="term" value="P:diaminopimelate biosynthetic process"/>
    <property type="evidence" value="ECO:0007669"/>
    <property type="project" value="UniProtKB-UniRule"/>
</dbReference>
<dbReference type="GO" id="GO:0009089">
    <property type="term" value="P:lysine biosynthetic process via diaminopimelate"/>
    <property type="evidence" value="ECO:0007669"/>
    <property type="project" value="UniProtKB-UniRule"/>
</dbReference>
<dbReference type="CDD" id="cd02274">
    <property type="entry name" value="DHDPR_N"/>
    <property type="match status" value="1"/>
</dbReference>
<dbReference type="FunFam" id="3.30.360.10:FF:000004">
    <property type="entry name" value="4-hydroxy-tetrahydrodipicolinate reductase"/>
    <property type="match status" value="1"/>
</dbReference>
<dbReference type="FunFam" id="3.40.50.720:FF:000048">
    <property type="entry name" value="4-hydroxy-tetrahydrodipicolinate reductase"/>
    <property type="match status" value="1"/>
</dbReference>
<dbReference type="Gene3D" id="3.30.360.10">
    <property type="entry name" value="Dihydrodipicolinate Reductase, domain 2"/>
    <property type="match status" value="1"/>
</dbReference>
<dbReference type="Gene3D" id="3.40.50.720">
    <property type="entry name" value="NAD(P)-binding Rossmann-like Domain"/>
    <property type="match status" value="1"/>
</dbReference>
<dbReference type="HAMAP" id="MF_00102">
    <property type="entry name" value="DapB"/>
    <property type="match status" value="1"/>
</dbReference>
<dbReference type="InterPro" id="IPR022663">
    <property type="entry name" value="DapB_C"/>
</dbReference>
<dbReference type="InterPro" id="IPR000846">
    <property type="entry name" value="DapB_N"/>
</dbReference>
<dbReference type="InterPro" id="IPR022664">
    <property type="entry name" value="DapB_N_CS"/>
</dbReference>
<dbReference type="InterPro" id="IPR023940">
    <property type="entry name" value="DHDPR_bac"/>
</dbReference>
<dbReference type="InterPro" id="IPR036291">
    <property type="entry name" value="NAD(P)-bd_dom_sf"/>
</dbReference>
<dbReference type="NCBIfam" id="TIGR00036">
    <property type="entry name" value="dapB"/>
    <property type="match status" value="1"/>
</dbReference>
<dbReference type="PANTHER" id="PTHR20836:SF0">
    <property type="entry name" value="4-HYDROXY-TETRAHYDRODIPICOLINATE REDUCTASE 1, CHLOROPLASTIC-RELATED"/>
    <property type="match status" value="1"/>
</dbReference>
<dbReference type="PANTHER" id="PTHR20836">
    <property type="entry name" value="DIHYDRODIPICOLINATE REDUCTASE"/>
    <property type="match status" value="1"/>
</dbReference>
<dbReference type="Pfam" id="PF05173">
    <property type="entry name" value="DapB_C"/>
    <property type="match status" value="1"/>
</dbReference>
<dbReference type="Pfam" id="PF01113">
    <property type="entry name" value="DapB_N"/>
    <property type="match status" value="1"/>
</dbReference>
<dbReference type="PIRSF" id="PIRSF000161">
    <property type="entry name" value="DHPR"/>
    <property type="match status" value="1"/>
</dbReference>
<dbReference type="SUPFAM" id="SSF55347">
    <property type="entry name" value="Glyceraldehyde-3-phosphate dehydrogenase-like, C-terminal domain"/>
    <property type="match status" value="1"/>
</dbReference>
<dbReference type="SUPFAM" id="SSF51735">
    <property type="entry name" value="NAD(P)-binding Rossmann-fold domains"/>
    <property type="match status" value="1"/>
</dbReference>
<dbReference type="PROSITE" id="PS01298">
    <property type="entry name" value="DAPB"/>
    <property type="match status" value="1"/>
</dbReference>